<evidence type="ECO:0000255" key="1">
    <source>
        <dbReference type="HAMAP-Rule" id="MF_00195"/>
    </source>
</evidence>
<evidence type="ECO:0000256" key="2">
    <source>
        <dbReference type="SAM" id="MobiDB-lite"/>
    </source>
</evidence>
<keyword id="KW-0342">GTP-binding</keyword>
<keyword id="KW-0547">Nucleotide-binding</keyword>
<keyword id="KW-0677">Repeat</keyword>
<keyword id="KW-0690">Ribosome biogenesis</keyword>
<comment type="function">
    <text evidence="1">GTPase that plays an essential role in the late steps of ribosome biogenesis.</text>
</comment>
<comment type="subunit">
    <text evidence="1">Associates with the 50S ribosomal subunit.</text>
</comment>
<comment type="similarity">
    <text evidence="1">Belongs to the TRAFAC class TrmE-Era-EngA-EngB-Septin-like GTPase superfamily. EngA (Der) GTPase family.</text>
</comment>
<accession>A1V9V1</accession>
<sequence length="495" mass="54881">MFAKIALVGRPNVGKSTLFNRLIRSNRAITHDMPGVTRDRMEGIVRGRNKRPFGIIDTGGITLDGHAAVAEGPAGIRGFEAEILRQAEEAIAECVAVCLVVDGREGLLPFDEHLASYLRRTGKPVLVVVNKVDGIEKEDVLTAEFHILGFPVLAVSAEHGHNLRWLESEMRDLLPEEDEDGIDDDAADATAVASADADVDADVETEGGTSASETEEGITEETVEDEPEAPLRLCMLGRPNAGKSSLVNALTGTNRMIVSDVAGTTRDSVDVAFEKDGLSYTFVDTAGVRRRSRITDTVERYSVNSSLKSTTKAHVTLLVLDAVEGITSQDKRLIELLDERKTPFMVLVNKMDLVPAKAREDGKRNFRDLLNFCQHVPLLFVSAKTGYELRSIVPLAARIRRECSVRIPTGQLNRAMEEVITRHQPPVVRRVRPKFYYMTQAESQPPTFVLFVNDADRIQAPYAKYIEKSLRRLFGIEHAPMRVHFRSSHKKNSEK</sequence>
<protein>
    <recommendedName>
        <fullName evidence="1">GTPase Der</fullName>
    </recommendedName>
    <alternativeName>
        <fullName evidence="1">GTP-binding protein EngA</fullName>
    </alternativeName>
</protein>
<name>DER_NITV4</name>
<feature type="chain" id="PRO_1000011618" description="GTPase Der">
    <location>
        <begin position="1"/>
        <end position="495"/>
    </location>
</feature>
<feature type="domain" description="EngA-type G 1">
    <location>
        <begin position="3"/>
        <end position="178"/>
    </location>
</feature>
<feature type="domain" description="EngA-type G 2">
    <location>
        <begin position="231"/>
        <end position="404"/>
    </location>
</feature>
<feature type="domain" description="KH-like" evidence="1">
    <location>
        <begin position="405"/>
        <end position="489"/>
    </location>
</feature>
<feature type="region of interest" description="Disordered" evidence="2">
    <location>
        <begin position="190"/>
        <end position="227"/>
    </location>
</feature>
<feature type="compositionally biased region" description="Acidic residues" evidence="2">
    <location>
        <begin position="213"/>
        <end position="227"/>
    </location>
</feature>
<feature type="binding site" evidence="1">
    <location>
        <begin position="9"/>
        <end position="16"/>
    </location>
    <ligand>
        <name>GTP</name>
        <dbReference type="ChEBI" id="CHEBI:37565"/>
        <label>1</label>
    </ligand>
</feature>
<feature type="binding site" evidence="1">
    <location>
        <begin position="57"/>
        <end position="61"/>
    </location>
    <ligand>
        <name>GTP</name>
        <dbReference type="ChEBI" id="CHEBI:37565"/>
        <label>1</label>
    </ligand>
</feature>
<feature type="binding site" evidence="1">
    <location>
        <begin position="130"/>
        <end position="133"/>
    </location>
    <ligand>
        <name>GTP</name>
        <dbReference type="ChEBI" id="CHEBI:37565"/>
        <label>1</label>
    </ligand>
</feature>
<feature type="binding site" evidence="1">
    <location>
        <begin position="237"/>
        <end position="244"/>
    </location>
    <ligand>
        <name>GTP</name>
        <dbReference type="ChEBI" id="CHEBI:37565"/>
        <label>2</label>
    </ligand>
</feature>
<feature type="binding site" evidence="1">
    <location>
        <begin position="284"/>
        <end position="288"/>
    </location>
    <ligand>
        <name>GTP</name>
        <dbReference type="ChEBI" id="CHEBI:37565"/>
        <label>2</label>
    </ligand>
</feature>
<feature type="binding site" evidence="1">
    <location>
        <begin position="349"/>
        <end position="352"/>
    </location>
    <ligand>
        <name>GTP</name>
        <dbReference type="ChEBI" id="CHEBI:37565"/>
        <label>2</label>
    </ligand>
</feature>
<gene>
    <name evidence="1" type="primary">der</name>
    <name type="synonym">engA</name>
    <name type="ordered locus">Dvul_0193</name>
</gene>
<reference key="1">
    <citation type="journal article" date="2009" name="Environ. Microbiol.">
        <title>Contribution of mobile genetic elements to Desulfovibrio vulgaris genome plasticity.</title>
        <authorList>
            <person name="Walker C.B."/>
            <person name="Stolyar S."/>
            <person name="Chivian D."/>
            <person name="Pinel N."/>
            <person name="Gabster J.A."/>
            <person name="Dehal P.S."/>
            <person name="He Z."/>
            <person name="Yang Z.K."/>
            <person name="Yen H.C."/>
            <person name="Zhou J."/>
            <person name="Wall J.D."/>
            <person name="Hazen T.C."/>
            <person name="Arkin A.P."/>
            <person name="Stahl D.A."/>
        </authorList>
    </citation>
    <scope>NUCLEOTIDE SEQUENCE [LARGE SCALE GENOMIC DNA]</scope>
    <source>
        <strain>DP4</strain>
    </source>
</reference>
<proteinExistence type="inferred from homology"/>
<organism>
    <name type="scientific">Nitratidesulfovibrio vulgaris (strain DP4)</name>
    <name type="common">Desulfovibrio vulgaris</name>
    <dbReference type="NCBI Taxonomy" id="391774"/>
    <lineage>
        <taxon>Bacteria</taxon>
        <taxon>Pseudomonadati</taxon>
        <taxon>Thermodesulfobacteriota</taxon>
        <taxon>Desulfovibrionia</taxon>
        <taxon>Desulfovibrionales</taxon>
        <taxon>Desulfovibrionaceae</taxon>
        <taxon>Nitratidesulfovibrio</taxon>
    </lineage>
</organism>
<dbReference type="EMBL" id="CP000527">
    <property type="protein sequence ID" value="ABM27217.1"/>
    <property type="molecule type" value="Genomic_DNA"/>
</dbReference>
<dbReference type="RefSeq" id="WP_011791453.1">
    <property type="nucleotide sequence ID" value="NC_008751.1"/>
</dbReference>
<dbReference type="SMR" id="A1V9V1"/>
<dbReference type="KEGG" id="dvl:Dvul_0193"/>
<dbReference type="HOGENOM" id="CLU_016077_6_2_7"/>
<dbReference type="Proteomes" id="UP000009173">
    <property type="component" value="Chromosome"/>
</dbReference>
<dbReference type="GO" id="GO:0005525">
    <property type="term" value="F:GTP binding"/>
    <property type="evidence" value="ECO:0007669"/>
    <property type="project" value="UniProtKB-UniRule"/>
</dbReference>
<dbReference type="GO" id="GO:0043022">
    <property type="term" value="F:ribosome binding"/>
    <property type="evidence" value="ECO:0007669"/>
    <property type="project" value="TreeGrafter"/>
</dbReference>
<dbReference type="GO" id="GO:0042254">
    <property type="term" value="P:ribosome biogenesis"/>
    <property type="evidence" value="ECO:0007669"/>
    <property type="project" value="UniProtKB-KW"/>
</dbReference>
<dbReference type="CDD" id="cd01894">
    <property type="entry name" value="EngA1"/>
    <property type="match status" value="1"/>
</dbReference>
<dbReference type="CDD" id="cd01895">
    <property type="entry name" value="EngA2"/>
    <property type="match status" value="1"/>
</dbReference>
<dbReference type="FunFam" id="3.30.300.20:FF:000004">
    <property type="entry name" value="GTPase Der"/>
    <property type="match status" value="1"/>
</dbReference>
<dbReference type="FunFam" id="3.40.50.300:FF:000494">
    <property type="entry name" value="tRNA modification GTPase MnmE"/>
    <property type="match status" value="1"/>
</dbReference>
<dbReference type="Gene3D" id="3.30.300.20">
    <property type="match status" value="1"/>
</dbReference>
<dbReference type="Gene3D" id="3.40.50.300">
    <property type="entry name" value="P-loop containing nucleotide triphosphate hydrolases"/>
    <property type="match status" value="2"/>
</dbReference>
<dbReference type="HAMAP" id="MF_00195">
    <property type="entry name" value="GTPase_Der"/>
    <property type="match status" value="1"/>
</dbReference>
<dbReference type="InterPro" id="IPR031166">
    <property type="entry name" value="G_ENGA"/>
</dbReference>
<dbReference type="InterPro" id="IPR006073">
    <property type="entry name" value="GTP-bd"/>
</dbReference>
<dbReference type="InterPro" id="IPR016484">
    <property type="entry name" value="GTPase_Der"/>
</dbReference>
<dbReference type="InterPro" id="IPR032859">
    <property type="entry name" value="KH_dom-like"/>
</dbReference>
<dbReference type="InterPro" id="IPR015946">
    <property type="entry name" value="KH_dom-like_a/b"/>
</dbReference>
<dbReference type="InterPro" id="IPR027417">
    <property type="entry name" value="P-loop_NTPase"/>
</dbReference>
<dbReference type="InterPro" id="IPR005225">
    <property type="entry name" value="Small_GTP-bd"/>
</dbReference>
<dbReference type="NCBIfam" id="TIGR03594">
    <property type="entry name" value="GTPase_EngA"/>
    <property type="match status" value="1"/>
</dbReference>
<dbReference type="NCBIfam" id="TIGR00231">
    <property type="entry name" value="small_GTP"/>
    <property type="match status" value="2"/>
</dbReference>
<dbReference type="PANTHER" id="PTHR43834">
    <property type="entry name" value="GTPASE DER"/>
    <property type="match status" value="1"/>
</dbReference>
<dbReference type="PANTHER" id="PTHR43834:SF6">
    <property type="entry name" value="GTPASE DER"/>
    <property type="match status" value="1"/>
</dbReference>
<dbReference type="Pfam" id="PF14714">
    <property type="entry name" value="KH_dom-like"/>
    <property type="match status" value="1"/>
</dbReference>
<dbReference type="Pfam" id="PF01926">
    <property type="entry name" value="MMR_HSR1"/>
    <property type="match status" value="2"/>
</dbReference>
<dbReference type="PIRSF" id="PIRSF006485">
    <property type="entry name" value="GTP-binding_EngA"/>
    <property type="match status" value="1"/>
</dbReference>
<dbReference type="SUPFAM" id="SSF52540">
    <property type="entry name" value="P-loop containing nucleoside triphosphate hydrolases"/>
    <property type="match status" value="2"/>
</dbReference>
<dbReference type="PROSITE" id="PS51712">
    <property type="entry name" value="G_ENGA"/>
    <property type="match status" value="2"/>
</dbReference>